<reference key="1">
    <citation type="journal article" date="2005" name="Nat. Biotechnol.">
        <title>Complete genome sequence of the acetic acid bacterium Gluconobacter oxydans.</title>
        <authorList>
            <person name="Prust C."/>
            <person name="Hoffmeister M."/>
            <person name="Liesegang H."/>
            <person name="Wiezer A."/>
            <person name="Fricke W.F."/>
            <person name="Ehrenreich A."/>
            <person name="Gottschalk G."/>
            <person name="Deppenmeier U."/>
        </authorList>
    </citation>
    <scope>NUCLEOTIDE SEQUENCE [LARGE SCALE GENOMIC DNA]</scope>
    <source>
        <strain>621H</strain>
    </source>
</reference>
<sequence length="426" mass="45300">MSAIVDITSREILDSRGNPTVEVEVELSSGARGRAAVPSGASTGAHEAVELRDGDKSRYGGKGVLKACSHVENDILEVLQGAESEDQIAIDNAMIDLDGTPNKSRLGANAILGVSLAVAKATAEELELPLYRYVGGAYAHLLPVPMMNIVNGGEHADNPIDIQEFMIQPVGAPTVADAIRMGSEIFARLKKGLSEAGYNTNVGDEGGFAPNLKSADEALGFIAKSVEAAGYKLGEDVTFALDCAATEFYADGRYNLKGEGKEFDASGMISYLEDLANRYPIVSIEDGLAEDDWEGWAELTTRLGKKLQLVGDDLFVTNPERLRRGIKAGTGNALLVKVNQIGTLTETLEAVETAHKAGYACVMSHRSGETEDSVIADLAVATNCGQIKTGSLSRSDRTAKYNQLIRIEQQLGSAARYAGRSILKNS</sequence>
<keyword id="KW-0963">Cytoplasm</keyword>
<keyword id="KW-0324">Glycolysis</keyword>
<keyword id="KW-0456">Lyase</keyword>
<keyword id="KW-0460">Magnesium</keyword>
<keyword id="KW-0479">Metal-binding</keyword>
<keyword id="KW-1185">Reference proteome</keyword>
<keyword id="KW-0964">Secreted</keyword>
<protein>
    <recommendedName>
        <fullName evidence="1">Enolase</fullName>
        <ecNumber evidence="1">4.2.1.11</ecNumber>
    </recommendedName>
    <alternativeName>
        <fullName evidence="1">2-phospho-D-glycerate hydro-lyase</fullName>
    </alternativeName>
    <alternativeName>
        <fullName evidence="1">2-phosphoglycerate dehydratase</fullName>
    </alternativeName>
</protein>
<dbReference type="EC" id="4.2.1.11" evidence="1"/>
<dbReference type="EMBL" id="CP000009">
    <property type="protein sequence ID" value="AAW62012.1"/>
    <property type="molecule type" value="Genomic_DNA"/>
</dbReference>
<dbReference type="RefSeq" id="WP_011253782.1">
    <property type="nucleotide sequence ID" value="NZ_LT900338.1"/>
</dbReference>
<dbReference type="SMR" id="Q5FNN5"/>
<dbReference type="STRING" id="290633.GOX2279"/>
<dbReference type="GeneID" id="56906646"/>
<dbReference type="KEGG" id="gox:GOX2279"/>
<dbReference type="eggNOG" id="COG0148">
    <property type="taxonomic scope" value="Bacteria"/>
</dbReference>
<dbReference type="HOGENOM" id="CLU_031223_2_1_5"/>
<dbReference type="UniPathway" id="UPA00109">
    <property type="reaction ID" value="UER00187"/>
</dbReference>
<dbReference type="Proteomes" id="UP000006375">
    <property type="component" value="Chromosome"/>
</dbReference>
<dbReference type="GO" id="GO:0009986">
    <property type="term" value="C:cell surface"/>
    <property type="evidence" value="ECO:0007669"/>
    <property type="project" value="UniProtKB-SubCell"/>
</dbReference>
<dbReference type="GO" id="GO:0005576">
    <property type="term" value="C:extracellular region"/>
    <property type="evidence" value="ECO:0007669"/>
    <property type="project" value="UniProtKB-SubCell"/>
</dbReference>
<dbReference type="GO" id="GO:0000015">
    <property type="term" value="C:phosphopyruvate hydratase complex"/>
    <property type="evidence" value="ECO:0007669"/>
    <property type="project" value="InterPro"/>
</dbReference>
<dbReference type="GO" id="GO:0000287">
    <property type="term" value="F:magnesium ion binding"/>
    <property type="evidence" value="ECO:0007669"/>
    <property type="project" value="UniProtKB-UniRule"/>
</dbReference>
<dbReference type="GO" id="GO:0004634">
    <property type="term" value="F:phosphopyruvate hydratase activity"/>
    <property type="evidence" value="ECO:0007669"/>
    <property type="project" value="UniProtKB-UniRule"/>
</dbReference>
<dbReference type="GO" id="GO:0006096">
    <property type="term" value="P:glycolytic process"/>
    <property type="evidence" value="ECO:0007669"/>
    <property type="project" value="UniProtKB-UniRule"/>
</dbReference>
<dbReference type="CDD" id="cd03313">
    <property type="entry name" value="enolase"/>
    <property type="match status" value="1"/>
</dbReference>
<dbReference type="FunFam" id="3.20.20.120:FF:000001">
    <property type="entry name" value="Enolase"/>
    <property type="match status" value="1"/>
</dbReference>
<dbReference type="FunFam" id="3.30.390.10:FF:000001">
    <property type="entry name" value="Enolase"/>
    <property type="match status" value="1"/>
</dbReference>
<dbReference type="Gene3D" id="3.20.20.120">
    <property type="entry name" value="Enolase-like C-terminal domain"/>
    <property type="match status" value="1"/>
</dbReference>
<dbReference type="Gene3D" id="3.30.390.10">
    <property type="entry name" value="Enolase-like, N-terminal domain"/>
    <property type="match status" value="1"/>
</dbReference>
<dbReference type="HAMAP" id="MF_00318">
    <property type="entry name" value="Enolase"/>
    <property type="match status" value="1"/>
</dbReference>
<dbReference type="InterPro" id="IPR000941">
    <property type="entry name" value="Enolase"/>
</dbReference>
<dbReference type="InterPro" id="IPR036849">
    <property type="entry name" value="Enolase-like_C_sf"/>
</dbReference>
<dbReference type="InterPro" id="IPR029017">
    <property type="entry name" value="Enolase-like_N"/>
</dbReference>
<dbReference type="InterPro" id="IPR020810">
    <property type="entry name" value="Enolase_C"/>
</dbReference>
<dbReference type="InterPro" id="IPR020809">
    <property type="entry name" value="Enolase_CS"/>
</dbReference>
<dbReference type="InterPro" id="IPR020811">
    <property type="entry name" value="Enolase_N"/>
</dbReference>
<dbReference type="NCBIfam" id="TIGR01060">
    <property type="entry name" value="eno"/>
    <property type="match status" value="1"/>
</dbReference>
<dbReference type="PANTHER" id="PTHR11902">
    <property type="entry name" value="ENOLASE"/>
    <property type="match status" value="1"/>
</dbReference>
<dbReference type="PANTHER" id="PTHR11902:SF1">
    <property type="entry name" value="ENOLASE"/>
    <property type="match status" value="1"/>
</dbReference>
<dbReference type="Pfam" id="PF00113">
    <property type="entry name" value="Enolase_C"/>
    <property type="match status" value="1"/>
</dbReference>
<dbReference type="Pfam" id="PF03952">
    <property type="entry name" value="Enolase_N"/>
    <property type="match status" value="1"/>
</dbReference>
<dbReference type="PIRSF" id="PIRSF001400">
    <property type="entry name" value="Enolase"/>
    <property type="match status" value="1"/>
</dbReference>
<dbReference type="PRINTS" id="PR00148">
    <property type="entry name" value="ENOLASE"/>
</dbReference>
<dbReference type="SFLD" id="SFLDF00002">
    <property type="entry name" value="enolase"/>
    <property type="match status" value="1"/>
</dbReference>
<dbReference type="SFLD" id="SFLDG00178">
    <property type="entry name" value="enolase"/>
    <property type="match status" value="1"/>
</dbReference>
<dbReference type="SMART" id="SM01192">
    <property type="entry name" value="Enolase_C"/>
    <property type="match status" value="1"/>
</dbReference>
<dbReference type="SMART" id="SM01193">
    <property type="entry name" value="Enolase_N"/>
    <property type="match status" value="1"/>
</dbReference>
<dbReference type="SUPFAM" id="SSF51604">
    <property type="entry name" value="Enolase C-terminal domain-like"/>
    <property type="match status" value="1"/>
</dbReference>
<dbReference type="SUPFAM" id="SSF54826">
    <property type="entry name" value="Enolase N-terminal domain-like"/>
    <property type="match status" value="1"/>
</dbReference>
<dbReference type="PROSITE" id="PS00164">
    <property type="entry name" value="ENOLASE"/>
    <property type="match status" value="1"/>
</dbReference>
<organism>
    <name type="scientific">Gluconobacter oxydans (strain 621H)</name>
    <name type="common">Gluconobacter suboxydans</name>
    <dbReference type="NCBI Taxonomy" id="290633"/>
    <lineage>
        <taxon>Bacteria</taxon>
        <taxon>Pseudomonadati</taxon>
        <taxon>Pseudomonadota</taxon>
        <taxon>Alphaproteobacteria</taxon>
        <taxon>Acetobacterales</taxon>
        <taxon>Acetobacteraceae</taxon>
        <taxon>Gluconobacter</taxon>
    </lineage>
</organism>
<evidence type="ECO:0000255" key="1">
    <source>
        <dbReference type="HAMAP-Rule" id="MF_00318"/>
    </source>
</evidence>
<proteinExistence type="inferred from homology"/>
<accession>Q5FNN5</accession>
<name>ENO_GLUOX</name>
<gene>
    <name evidence="1" type="primary">eno</name>
    <name type="ordered locus">GOX2279</name>
</gene>
<feature type="chain" id="PRO_0000133893" description="Enolase">
    <location>
        <begin position="1"/>
        <end position="426"/>
    </location>
</feature>
<feature type="active site" description="Proton donor" evidence="1">
    <location>
        <position position="205"/>
    </location>
</feature>
<feature type="active site" description="Proton acceptor" evidence="1">
    <location>
        <position position="337"/>
    </location>
</feature>
<feature type="binding site" evidence="1">
    <location>
        <position position="163"/>
    </location>
    <ligand>
        <name>(2R)-2-phosphoglycerate</name>
        <dbReference type="ChEBI" id="CHEBI:58289"/>
    </ligand>
</feature>
<feature type="binding site" evidence="1">
    <location>
        <position position="242"/>
    </location>
    <ligand>
        <name>Mg(2+)</name>
        <dbReference type="ChEBI" id="CHEBI:18420"/>
    </ligand>
</feature>
<feature type="binding site" evidence="1">
    <location>
        <position position="285"/>
    </location>
    <ligand>
        <name>Mg(2+)</name>
        <dbReference type="ChEBI" id="CHEBI:18420"/>
    </ligand>
</feature>
<feature type="binding site" evidence="1">
    <location>
        <position position="312"/>
    </location>
    <ligand>
        <name>Mg(2+)</name>
        <dbReference type="ChEBI" id="CHEBI:18420"/>
    </ligand>
</feature>
<feature type="binding site" evidence="1">
    <location>
        <position position="337"/>
    </location>
    <ligand>
        <name>(2R)-2-phosphoglycerate</name>
        <dbReference type="ChEBI" id="CHEBI:58289"/>
    </ligand>
</feature>
<feature type="binding site" evidence="1">
    <location>
        <position position="366"/>
    </location>
    <ligand>
        <name>(2R)-2-phosphoglycerate</name>
        <dbReference type="ChEBI" id="CHEBI:58289"/>
    </ligand>
</feature>
<feature type="binding site" evidence="1">
    <location>
        <position position="367"/>
    </location>
    <ligand>
        <name>(2R)-2-phosphoglycerate</name>
        <dbReference type="ChEBI" id="CHEBI:58289"/>
    </ligand>
</feature>
<feature type="binding site" evidence="1">
    <location>
        <position position="388"/>
    </location>
    <ligand>
        <name>(2R)-2-phosphoglycerate</name>
        <dbReference type="ChEBI" id="CHEBI:58289"/>
    </ligand>
</feature>
<comment type="function">
    <text evidence="1">Catalyzes the reversible conversion of 2-phosphoglycerate (2-PG) into phosphoenolpyruvate (PEP). It is essential for the degradation of carbohydrates via glycolysis.</text>
</comment>
<comment type="catalytic activity">
    <reaction evidence="1">
        <text>(2R)-2-phosphoglycerate = phosphoenolpyruvate + H2O</text>
        <dbReference type="Rhea" id="RHEA:10164"/>
        <dbReference type="ChEBI" id="CHEBI:15377"/>
        <dbReference type="ChEBI" id="CHEBI:58289"/>
        <dbReference type="ChEBI" id="CHEBI:58702"/>
        <dbReference type="EC" id="4.2.1.11"/>
    </reaction>
</comment>
<comment type="cofactor">
    <cofactor evidence="1">
        <name>Mg(2+)</name>
        <dbReference type="ChEBI" id="CHEBI:18420"/>
    </cofactor>
    <text evidence="1">Binds a second Mg(2+) ion via substrate during catalysis.</text>
</comment>
<comment type="pathway">
    <text evidence="1">Carbohydrate degradation; glycolysis; pyruvate from D-glyceraldehyde 3-phosphate: step 4/5.</text>
</comment>
<comment type="subcellular location">
    <subcellularLocation>
        <location evidence="1">Cytoplasm</location>
    </subcellularLocation>
    <subcellularLocation>
        <location evidence="1">Secreted</location>
    </subcellularLocation>
    <subcellularLocation>
        <location evidence="1">Cell surface</location>
    </subcellularLocation>
    <text evidence="1">Fractions of enolase are present in both the cytoplasm and on the cell surface.</text>
</comment>
<comment type="similarity">
    <text evidence="1">Belongs to the enolase family.</text>
</comment>